<sequence length="347" mass="36926">MLKFIQNNREATALLAIVCLFVFPGALDSQYLSVQTLTMVFSSAQILMLLAIGATMVMLTRNIDVSVGSTTGMCAVLLGVMLNAGYSLPVACLATLILGIVAGFFNGVLVAWLKIPAIVATLGTLGLYRGIMLLWTGGKWIEGLPAGLKQLSAPVFLGISAIGWFTLVLALLMAWLLAKTAFGRNFYATGDNLQGARQLGVRTEMVRIMAFSLNGGMAALAGIVFASQIGFIPNQTGTGLEMKAIAACVLGGISLLGGSGTVIGAILGAYFLTQIDSVLVLLRIPAWWNDFIAGLVLLGVLVFDGRLRCALQRNLRRQKYARFISPPTPLQTEAKTHAQQNKNKEVA</sequence>
<evidence type="ECO:0000250" key="1"/>
<evidence type="ECO:0000255" key="2"/>
<evidence type="ECO:0000269" key="3">
    <source>
    </source>
</evidence>
<evidence type="ECO:0000305" key="4"/>
<evidence type="ECO:0000305" key="5">
    <source>
    </source>
</evidence>
<feature type="chain" id="PRO_0000351350" description="Autoinducer 2 import system permease protein LsrC">
    <location>
        <begin position="1"/>
        <end position="347"/>
    </location>
</feature>
<feature type="transmembrane region" description="Helical" evidence="2">
    <location>
        <begin position="14"/>
        <end position="34"/>
    </location>
</feature>
<feature type="transmembrane region" description="Helical" evidence="2">
    <location>
        <begin position="39"/>
        <end position="59"/>
    </location>
</feature>
<feature type="transmembrane region" description="Helical" evidence="2">
    <location>
        <begin position="72"/>
        <end position="92"/>
    </location>
</feature>
<feature type="transmembrane region" description="Helical" evidence="2">
    <location>
        <begin position="93"/>
        <end position="113"/>
    </location>
</feature>
<feature type="transmembrane region" description="Helical" evidence="2">
    <location>
        <begin position="115"/>
        <end position="135"/>
    </location>
</feature>
<feature type="transmembrane region" description="Helical" evidence="2">
    <location>
        <begin position="155"/>
        <end position="175"/>
    </location>
</feature>
<feature type="transmembrane region" description="Helical" evidence="2">
    <location>
        <begin position="213"/>
        <end position="233"/>
    </location>
</feature>
<feature type="transmembrane region" description="Helical" evidence="2">
    <location>
        <begin position="249"/>
        <end position="269"/>
    </location>
</feature>
<feature type="transmembrane region" description="Helical" evidence="2">
    <location>
        <begin position="284"/>
        <end position="304"/>
    </location>
</feature>
<organism>
    <name type="scientific">Salmonella typhimurium (strain LT2 / SGSC1412 / ATCC 700720)</name>
    <dbReference type="NCBI Taxonomy" id="99287"/>
    <lineage>
        <taxon>Bacteria</taxon>
        <taxon>Pseudomonadati</taxon>
        <taxon>Pseudomonadota</taxon>
        <taxon>Gammaproteobacteria</taxon>
        <taxon>Enterobacterales</taxon>
        <taxon>Enterobacteriaceae</taxon>
        <taxon>Salmonella</taxon>
    </lineage>
</organism>
<dbReference type="EMBL" id="AE006468">
    <property type="protein sequence ID" value="AAL22915.1"/>
    <property type="molecule type" value="Genomic_DNA"/>
</dbReference>
<dbReference type="RefSeq" id="WP_000911134.1">
    <property type="nucleotide sequence ID" value="NC_003197.2"/>
</dbReference>
<dbReference type="STRING" id="99287.STM4075"/>
<dbReference type="PaxDb" id="99287-STM4075"/>
<dbReference type="KEGG" id="stm:STM4075"/>
<dbReference type="PATRIC" id="fig|99287.12.peg.4295"/>
<dbReference type="HOGENOM" id="CLU_028880_0_1_6"/>
<dbReference type="OMA" id="FGRDFYA"/>
<dbReference type="PhylomeDB" id="Q8ZKQ3"/>
<dbReference type="BioCyc" id="SENT99287:STM4075-MONOMER"/>
<dbReference type="Proteomes" id="UP000001014">
    <property type="component" value="Chromosome"/>
</dbReference>
<dbReference type="GO" id="GO:0005886">
    <property type="term" value="C:plasma membrane"/>
    <property type="evidence" value="ECO:0000318"/>
    <property type="project" value="GO_Central"/>
</dbReference>
<dbReference type="GO" id="GO:0022857">
    <property type="term" value="F:transmembrane transporter activity"/>
    <property type="evidence" value="ECO:0007669"/>
    <property type="project" value="InterPro"/>
</dbReference>
<dbReference type="CDD" id="cd06579">
    <property type="entry name" value="TM_PBP1_transp_AraH_like"/>
    <property type="match status" value="1"/>
</dbReference>
<dbReference type="InterPro" id="IPR001851">
    <property type="entry name" value="ABC_transp_permease"/>
</dbReference>
<dbReference type="NCBIfam" id="NF011961">
    <property type="entry name" value="PRK15432.1"/>
    <property type="match status" value="1"/>
</dbReference>
<dbReference type="PANTHER" id="PTHR32196">
    <property type="entry name" value="ABC TRANSPORTER PERMEASE PROTEIN YPHD-RELATED-RELATED"/>
    <property type="match status" value="1"/>
</dbReference>
<dbReference type="PANTHER" id="PTHR32196:SF29">
    <property type="entry name" value="AUTOINDUCER 2 IMPORT SYSTEM PERMEASE PROTEIN LSRC"/>
    <property type="match status" value="1"/>
</dbReference>
<dbReference type="Pfam" id="PF02653">
    <property type="entry name" value="BPD_transp_2"/>
    <property type="match status" value="1"/>
</dbReference>
<comment type="function">
    <text evidence="5">Part of the ABC transporter complex LsrABCD involved in autoinducer 2 (AI-2) import. Probably responsible for the translocation of the substrate across the membrane (Probable).</text>
</comment>
<comment type="subunit">
    <text evidence="4">The complex is composed of two ATP-binding proteins (LsrA), two transmembrane proteins (LsrC and LsrD) and a solute-binding protein (LsrB).</text>
</comment>
<comment type="subcellular location">
    <subcellularLocation>
        <location evidence="1">Cell inner membrane</location>
        <topology evidence="1">Multi-pass membrane protein</topology>
    </subcellularLocation>
</comment>
<comment type="induction">
    <text evidence="3">In the absence of AI-2, repressed by LsrR. Induced by AI-2, via release of the LsrR repressor.</text>
</comment>
<comment type="similarity">
    <text evidence="4">Belongs to the binding-protein-dependent transport system permease family. AraH/RbsC subfamily.</text>
</comment>
<name>LSRC_SALTY</name>
<accession>Q8ZKQ3</accession>
<reference key="1">
    <citation type="journal article" date="2001" name="Nature">
        <title>Complete genome sequence of Salmonella enterica serovar Typhimurium LT2.</title>
        <authorList>
            <person name="McClelland M."/>
            <person name="Sanderson K.E."/>
            <person name="Spieth J."/>
            <person name="Clifton S.W."/>
            <person name="Latreille P."/>
            <person name="Courtney L."/>
            <person name="Porwollik S."/>
            <person name="Ali J."/>
            <person name="Dante M."/>
            <person name="Du F."/>
            <person name="Hou S."/>
            <person name="Layman D."/>
            <person name="Leonard S."/>
            <person name="Nguyen C."/>
            <person name="Scott K."/>
            <person name="Holmes A."/>
            <person name="Grewal N."/>
            <person name="Mulvaney E."/>
            <person name="Ryan E."/>
            <person name="Sun H."/>
            <person name="Florea L."/>
            <person name="Miller W."/>
            <person name="Stoneking T."/>
            <person name="Nhan M."/>
            <person name="Waterston R."/>
            <person name="Wilson R.K."/>
        </authorList>
    </citation>
    <scope>NUCLEOTIDE SEQUENCE [LARGE SCALE GENOMIC DNA]</scope>
    <source>
        <strain>LT2 / SGSC1412 / ATCC 700720</strain>
    </source>
</reference>
<reference key="2">
    <citation type="journal article" date="2001" name="Mol. Microbiol.">
        <title>The LuxS-dependent autoinducer AI-2 controls the expression of an ABC transporter that functions in AI-2 uptake in Salmonella typhimurium.</title>
        <authorList>
            <person name="Taga M.E."/>
            <person name="Semmelhack J.L."/>
            <person name="Bassler B.L."/>
        </authorList>
    </citation>
    <scope>FUNCTION IN AI-2 IMPORT</scope>
    <scope>INDUCTION</scope>
    <source>
        <strain>ATCC 14028 / SGSG 2980 / CDC 6516-60 / NCTC 12023</strain>
    </source>
</reference>
<gene>
    <name type="primary">lsrC</name>
    <name type="ordered locus">STM4075</name>
</gene>
<keyword id="KW-0997">Cell inner membrane</keyword>
<keyword id="KW-1003">Cell membrane</keyword>
<keyword id="KW-0472">Membrane</keyword>
<keyword id="KW-1185">Reference proteome</keyword>
<keyword id="KW-0812">Transmembrane</keyword>
<keyword id="KW-1133">Transmembrane helix</keyword>
<keyword id="KW-0813">Transport</keyword>
<protein>
    <recommendedName>
        <fullName>Autoinducer 2 import system permease protein LsrC</fullName>
        <shortName>AI-2 import system permease protein LsrC</shortName>
    </recommendedName>
</protein>
<proteinExistence type="evidence at protein level"/>